<name>Y3766_MYCTU</name>
<sequence>MTDTLFADVSEYQVPVNNSYPYRVLSIRVCDGTYRDRNFAHNYRWMRSAFDSGRLTFGIVYTYARPNWWANANTVRSMIDAAGGLHPRVALMLDVESGGNPPGDGSSWINRLYWNLADYAGSPVRIIGYANAYDFFNMWRVRPAGLRVIGAGYGSNPNLPGQVAHQYTDGSGYSPNLPQGAPPFGRCDMNSANGLTPQQFAAACGVTTTGGPLMALTDEEQTELLTKVREIWDQLRGPNGAGWPQLGQNEQGQDLTPVDAIAVIKNDVAAMLAE</sequence>
<accession>O69731</accession>
<accession>F2GHG7</accession>
<accession>I6YH39</accession>
<accession>L0TDH6</accession>
<evidence type="ECO:0000312" key="1">
    <source>
        <dbReference type="EMBL" id="AFN51790.1"/>
    </source>
</evidence>
<evidence type="ECO:0000312" key="2">
    <source>
        <dbReference type="EMBL" id="CCP46593.1"/>
    </source>
</evidence>
<evidence type="ECO:0000312" key="3">
    <source>
        <dbReference type="EMBL" id="KBJ24841.1"/>
    </source>
</evidence>
<dbReference type="EMBL" id="AL123456">
    <property type="protein sequence ID" value="CCP46593.1"/>
    <property type="status" value="ALT_INIT"/>
    <property type="molecule type" value="Genomic_DNA"/>
</dbReference>
<dbReference type="EMBL" id="CP003248">
    <property type="protein sequence ID" value="AFN51790.1"/>
    <property type="status" value="ALT_INIT"/>
    <property type="molecule type" value="Genomic_DNA"/>
</dbReference>
<dbReference type="EMBL" id="JLDD01000048">
    <property type="protein sequence ID" value="KBJ24841.1"/>
    <property type="status" value="ALT_INIT"/>
    <property type="molecule type" value="Genomic_DNA"/>
</dbReference>
<dbReference type="RefSeq" id="NP_218283.1">
    <property type="nucleotide sequence ID" value="NC_000962.3"/>
</dbReference>
<dbReference type="RefSeq" id="WP_003420555.1">
    <property type="nucleotide sequence ID" value="NC_000962.3"/>
</dbReference>
<dbReference type="RefSeq" id="WP_003912342.1">
    <property type="nucleotide sequence ID" value="NZ_NVQJ01000009.1"/>
</dbReference>
<dbReference type="SMR" id="O69731"/>
<dbReference type="STRING" id="83332.Rv3766"/>
<dbReference type="PaxDb" id="83332-Rv3766"/>
<dbReference type="DNASU" id="886099"/>
<dbReference type="GeneID" id="886099"/>
<dbReference type="KEGG" id="mtu:Rv3766"/>
<dbReference type="KEGG" id="mtv:RVBD_3766"/>
<dbReference type="PATRIC" id="fig|83332.111.peg.4188"/>
<dbReference type="TubercuList" id="Rv3766"/>
<dbReference type="eggNOG" id="COG0739">
    <property type="taxonomic scope" value="Bacteria"/>
</dbReference>
<dbReference type="InParanoid" id="O69731"/>
<dbReference type="OrthoDB" id="4369457at2"/>
<dbReference type="Proteomes" id="UP000001584">
    <property type="component" value="Chromosome"/>
</dbReference>
<dbReference type="Gene3D" id="3.20.20.80">
    <property type="entry name" value="Glycosidases"/>
    <property type="match status" value="1"/>
</dbReference>
<dbReference type="InterPro" id="IPR017853">
    <property type="entry name" value="Glycoside_hydrolase_SF"/>
</dbReference>
<dbReference type="SUPFAM" id="SSF51445">
    <property type="entry name" value="(Trans)glycosidases"/>
    <property type="match status" value="1"/>
</dbReference>
<proteinExistence type="evidence at protein level"/>
<gene>
    <name evidence="2" type="ordered locus">Rv3766</name>
    <name evidence="1" type="ordered locus">RVBD_3766</name>
    <name evidence="3" type="ORF">P425_03919</name>
</gene>
<protein>
    <recommendedName>
        <fullName>Uncharacterized protein Rv3766</fullName>
    </recommendedName>
</protein>
<organism>
    <name type="scientific">Mycobacterium tuberculosis (strain ATCC 25618 / H37Rv)</name>
    <dbReference type="NCBI Taxonomy" id="83332"/>
    <lineage>
        <taxon>Bacteria</taxon>
        <taxon>Bacillati</taxon>
        <taxon>Actinomycetota</taxon>
        <taxon>Actinomycetes</taxon>
        <taxon>Mycobacteriales</taxon>
        <taxon>Mycobacteriaceae</taxon>
        <taxon>Mycobacterium</taxon>
        <taxon>Mycobacterium tuberculosis complex</taxon>
    </lineage>
</organism>
<comment type="sequence caution">
    <conflict type="erroneous initiation">
        <sequence resource="EMBL-CDS" id="AFN51790"/>
    </conflict>
    <text>Truncated N-terminus.</text>
</comment>
<comment type="sequence caution">
    <conflict type="erroneous initiation">
        <sequence resource="EMBL-CDS" id="CCP46593"/>
    </conflict>
    <text>Truncated N-terminus.</text>
</comment>
<comment type="sequence caution">
    <conflict type="erroneous initiation">
        <sequence resource="EMBL-CDS" id="KBJ24841"/>
    </conflict>
    <text>Truncated N-terminus.</text>
</comment>
<keyword id="KW-1185">Reference proteome</keyword>
<feature type="chain" id="PRO_0000432523" description="Uncharacterized protein Rv3766">
    <location>
        <begin position="1"/>
        <end position="274"/>
    </location>
</feature>
<reference key="1">
    <citation type="journal article" date="1998" name="Nature">
        <title>Deciphering the biology of Mycobacterium tuberculosis from the complete genome sequence.</title>
        <authorList>
            <person name="Cole S.T."/>
            <person name="Brosch R."/>
            <person name="Parkhill J."/>
            <person name="Garnier T."/>
            <person name="Churcher C.M."/>
            <person name="Harris D.E."/>
            <person name="Gordon S.V."/>
            <person name="Eiglmeier K."/>
            <person name="Gas S."/>
            <person name="Barry C.E. III"/>
            <person name="Tekaia F."/>
            <person name="Badcock K."/>
            <person name="Basham D."/>
            <person name="Brown D."/>
            <person name="Chillingworth T."/>
            <person name="Connor R."/>
            <person name="Davies R.M."/>
            <person name="Devlin K."/>
            <person name="Feltwell T."/>
            <person name="Gentles S."/>
            <person name="Hamlin N."/>
            <person name="Holroyd S."/>
            <person name="Hornsby T."/>
            <person name="Jagels K."/>
            <person name="Krogh A."/>
            <person name="McLean J."/>
            <person name="Moule S."/>
            <person name="Murphy L.D."/>
            <person name="Oliver S."/>
            <person name="Osborne J."/>
            <person name="Quail M.A."/>
            <person name="Rajandream M.A."/>
            <person name="Rogers J."/>
            <person name="Rutter S."/>
            <person name="Seeger K."/>
            <person name="Skelton S."/>
            <person name="Squares S."/>
            <person name="Squares R."/>
            <person name="Sulston J.E."/>
            <person name="Taylor K."/>
            <person name="Whitehead S."/>
            <person name="Barrell B.G."/>
        </authorList>
    </citation>
    <scope>NUCLEOTIDE SEQUENCE [LARGE SCALE GENOMIC DNA]</scope>
    <source>
        <strain>ATCC 25618 / H37Rv</strain>
    </source>
</reference>
<reference key="2">
    <citation type="submission" date="2013-11" db="EMBL/GenBank/DDBJ databases">
        <title>The genome sequence of Mycobacterium tuberculosis H37Rv.</title>
        <authorList>
            <consortium name="The Broad Institute Genome Sequencing Platform"/>
            <person name="Galagan J."/>
            <person name="Kreiswirth B."/>
            <person name="Dobos K."/>
            <person name="Fortune S."/>
            <person name="Fitzgerald M."/>
            <person name="Young S.K."/>
            <person name="Zeng Q."/>
            <person name="Gargeya S."/>
            <person name="Abouelleil A."/>
            <person name="Alvarado L."/>
            <person name="Berlin A.M."/>
            <person name="Chapman S.B."/>
            <person name="Gainer-Dewar J."/>
            <person name="Goldberg J."/>
            <person name="Gnerre S."/>
            <person name="Griggs A."/>
            <person name="Gujja S."/>
            <person name="Hansen M."/>
            <person name="Howarth C."/>
            <person name="Imamovic A."/>
            <person name="Larimer J."/>
            <person name="McCowan C."/>
            <person name="Murphy C."/>
            <person name="Pearson M."/>
            <person name="Poon T."/>
            <person name="Priest M."/>
            <person name="Roberts A."/>
            <person name="Saif S."/>
            <person name="Shea T."/>
            <person name="Sykes S."/>
            <person name="Wortman J."/>
            <person name="Nusbaum C."/>
            <person name="Birren B."/>
        </authorList>
    </citation>
    <scope>NUCLEOTIDE SEQUENCE [LARGE SCALE GENOMIC DNA]</scope>
    <source>
        <strain>ATCC 25618 / H37Rv</strain>
    </source>
</reference>
<reference key="3">
    <citation type="submission" date="2014-04" db="EMBL/GenBank/DDBJ databases">
        <title>The genome sequence of Mycobacterium tuberculosis H37Rv.</title>
        <authorList>
            <consortium name="The Broad Institute Genomics Platform"/>
            <consortium name="The Broad Institute Genome Sequencing Center for Infectious Disease"/>
            <person name="Earl A.M."/>
            <person name="Kreiswirth B."/>
            <person name="Gomez J."/>
            <person name="Victor T."/>
            <person name="Desjardins C."/>
            <person name="Abeel T."/>
            <person name="Young S."/>
            <person name="Zeng Q."/>
            <person name="Gargeya S."/>
            <person name="Abouelleil A."/>
            <person name="Alvarado L."/>
            <person name="Chapman S.B."/>
            <person name="Gainer-Dewar J."/>
            <person name="Goldberg J."/>
            <person name="Griggs A."/>
            <person name="Gujja S."/>
            <person name="Hansen M."/>
            <person name="Howarth C."/>
            <person name="Imamovic A."/>
            <person name="Larimer J."/>
            <person name="Murphy C."/>
            <person name="Naylor J."/>
            <person name="Pearson M."/>
            <person name="Poon T.W."/>
            <person name="Priest M."/>
            <person name="Roberts A."/>
            <person name="Saif S."/>
            <person name="Shea T."/>
            <person name="Sykes S."/>
            <person name="Wortman J."/>
            <person name="Nusbaum C."/>
            <person name="Birren B."/>
        </authorList>
    </citation>
    <scope>NUCLEOTIDE SEQUENCE [LARGE SCALE GENOMIC DNA]</scope>
    <source>
        <strain>ATCC 25618 / H37Rv</strain>
    </source>
</reference>
<reference key="4">
    <citation type="journal article" date="2011" name="Mol. Cell. Proteomics">
        <title>Proteogenomic analysis of Mycobacterium tuberculosis by high resolution mass spectrometry.</title>
        <authorList>
            <person name="Kelkar D.S."/>
            <person name="Kumar D."/>
            <person name="Kumar P."/>
            <person name="Balakrishnan L."/>
            <person name="Muthusamy B."/>
            <person name="Yadav A.K."/>
            <person name="Shrivastava P."/>
            <person name="Marimuthu A."/>
            <person name="Anand S."/>
            <person name="Sundaram H."/>
            <person name="Kingsbury R."/>
            <person name="Harsha H.C."/>
            <person name="Nair B."/>
            <person name="Prasad T.S."/>
            <person name="Chauhan D.S."/>
            <person name="Katoch K."/>
            <person name="Katoch V.M."/>
            <person name="Kumar P."/>
            <person name="Chaerkady R."/>
            <person name="Ramachandran S."/>
            <person name="Dash D."/>
            <person name="Pandey A."/>
        </authorList>
    </citation>
    <scope>IDENTIFICATION BY MASS SPECTROMETRY [LARGE SCALE ANALYSIS]</scope>
    <source>
        <strain>ATCC 25618 / H37Rv</strain>
    </source>
</reference>